<keyword id="KW-1035">Host cytoplasm</keyword>
<keyword id="KW-1185">Reference proteome</keyword>
<keyword id="KW-0118">Viral capsid assembly</keyword>
<keyword id="KW-1188">Viral release from host cell</keyword>
<name>SCAFD_BPS13</name>
<sequence>MSQVTEQSVRFQTALASIKLIQASAVLDLTEDDFDFLTSNKVWIATDRSRARRCVEACVYGTLDFVGYPRFPAPVEFIAAVIAYYVHPVNIQTACLIMEGAEFTENIINGVERPVKAAELFAFTLRVRAGNTDVLTDAEENVRQKLRAEGVM</sequence>
<comment type="function">
    <text evidence="1">Assembles the procapsid by joining twelve 12S pre-assembly complex into a T=1 icosahedral particle, called 108S procapsid. Ten proteins D bind each 12S complex, which are formed by three pentamers of F, G, B protein and a H protein. The scaffolding protein is released from the provirion after genome packaging to form the mature virion.</text>
</comment>
<comment type="subunit">
    <text evidence="1">Component of the procapsid particle composed of 60 copies of the internally located B, 240 copies of the external scaffolding protein D, 60 copies of each of the viral structural proteins F and G, and 12 copies of protein H.</text>
</comment>
<comment type="subcellular location">
    <subcellularLocation>
        <location evidence="1">Host cytoplasm</location>
    </subcellularLocation>
</comment>
<comment type="similarity">
    <text evidence="2">Belongs to the microvirus D protein family.</text>
</comment>
<feature type="initiator methionine" description="Removed; by host" evidence="1">
    <location>
        <position position="1"/>
    </location>
</feature>
<feature type="chain" id="PRO_0000164881" description="External scaffolding protein D">
    <location>
        <begin position="2"/>
        <end position="152"/>
    </location>
</feature>
<dbReference type="EMBL" id="M14428">
    <property type="protein sequence ID" value="AAA32587.1"/>
    <property type="molecule type" value="Genomic_DNA"/>
</dbReference>
<dbReference type="PIR" id="JS0454">
    <property type="entry name" value="JS0454"/>
</dbReference>
<dbReference type="SMR" id="P69487"/>
<dbReference type="Proteomes" id="UP000002129">
    <property type="component" value="Segment"/>
</dbReference>
<dbReference type="GO" id="GO:0030430">
    <property type="term" value="C:host cell cytoplasm"/>
    <property type="evidence" value="ECO:0007669"/>
    <property type="project" value="UniProtKB-SubCell"/>
</dbReference>
<dbReference type="GO" id="GO:0046797">
    <property type="term" value="P:viral procapsid maturation"/>
    <property type="evidence" value="ECO:0007669"/>
    <property type="project" value="InterPro"/>
</dbReference>
<dbReference type="Gene3D" id="1.10.1850.10">
    <property type="entry name" value="Scaffold protein D"/>
    <property type="match status" value="1"/>
</dbReference>
<dbReference type="InterPro" id="IPR004196">
    <property type="entry name" value="Scaffold_D"/>
</dbReference>
<dbReference type="InterPro" id="IPR036632">
    <property type="entry name" value="Scaffold_D_sf"/>
</dbReference>
<dbReference type="Pfam" id="PF02925">
    <property type="entry name" value="gpD"/>
    <property type="match status" value="1"/>
</dbReference>
<dbReference type="SUPFAM" id="SSF48045">
    <property type="entry name" value="Scaffolding protein gpD of bacteriophage procapsid"/>
    <property type="match status" value="1"/>
</dbReference>
<organismHost>
    <name type="scientific">Salmonella</name>
    <dbReference type="NCBI Taxonomy" id="590"/>
</organismHost>
<reference key="1">
    <citation type="journal article" date="1985" name="Gene">
        <title>Nucleotide sequence and genome organization of bacteriophage S13 DNA.</title>
        <authorList>
            <person name="Lau P.C.K."/>
            <person name="Spencer J.H."/>
        </authorList>
    </citation>
    <scope>NUCLEOTIDE SEQUENCE [GENOMIC DNA]</scope>
</reference>
<accession>P69487</accession>
<accession>P03637</accession>
<protein>
    <recommendedName>
        <fullName>External scaffolding protein D</fullName>
    </recommendedName>
    <alternativeName>
        <fullName>Scaffolding protein D</fullName>
        <shortName>GPD</shortName>
    </alternativeName>
</protein>
<evidence type="ECO:0000250" key="1">
    <source>
        <dbReference type="UniProtKB" id="P69486"/>
    </source>
</evidence>
<evidence type="ECO:0000305" key="2"/>
<proteinExistence type="inferred from homology"/>
<organism>
    <name type="scientific">Enterobacteria phage S13</name>
    <name type="common">Bacteriophage S13</name>
    <dbReference type="NCBI Taxonomy" id="10844"/>
    <lineage>
        <taxon>Viruses</taxon>
        <taxon>Monodnaviria</taxon>
        <taxon>Sangervirae</taxon>
        <taxon>Phixviricota</taxon>
        <taxon>Malgrandaviricetes</taxon>
        <taxon>Petitvirales</taxon>
        <taxon>Microviridae</taxon>
        <taxon>Bullavirinae</taxon>
        <taxon>Sinsheimervirus</taxon>
        <taxon>Escherichia phage phiX174</taxon>
        <taxon>Escherichia phage phiX174</taxon>
    </lineage>
</organism>
<gene>
    <name type="primary">D</name>
</gene>